<feature type="initiator methionine" description="Removed" evidence="1">
    <location>
        <position position="1"/>
    </location>
</feature>
<feature type="chain" id="PRO_0000168431" description="L-lactate dehydrogenase A chain">
    <location>
        <begin position="2"/>
        <end position="331"/>
    </location>
</feature>
<feature type="active site" description="Proton acceptor" evidence="1">
    <location>
        <position position="192"/>
    </location>
</feature>
<feature type="binding site" evidence="1">
    <location>
        <begin position="29"/>
        <end position="57"/>
    </location>
    <ligand>
        <name>NAD(+)</name>
        <dbReference type="ChEBI" id="CHEBI:57540"/>
    </ligand>
</feature>
<feature type="binding site" evidence="1">
    <location>
        <position position="98"/>
    </location>
    <ligand>
        <name>NAD(+)</name>
        <dbReference type="ChEBI" id="CHEBI:57540"/>
    </ligand>
</feature>
<feature type="binding site" evidence="1">
    <location>
        <position position="105"/>
    </location>
    <ligand>
        <name>substrate</name>
    </ligand>
</feature>
<feature type="binding site" evidence="1">
    <location>
        <position position="137"/>
    </location>
    <ligand>
        <name>NAD(+)</name>
        <dbReference type="ChEBI" id="CHEBI:57540"/>
    </ligand>
</feature>
<feature type="binding site" evidence="1">
    <location>
        <position position="137"/>
    </location>
    <ligand>
        <name>substrate</name>
    </ligand>
</feature>
<feature type="binding site" evidence="1">
    <location>
        <position position="168"/>
    </location>
    <ligand>
        <name>substrate</name>
    </ligand>
</feature>
<feature type="binding site" evidence="1">
    <location>
        <position position="247"/>
    </location>
    <ligand>
        <name>substrate</name>
    </ligand>
</feature>
<feature type="helix" evidence="4">
    <location>
        <begin position="3"/>
        <end position="7"/>
    </location>
</feature>
<feature type="strand" evidence="4">
    <location>
        <begin position="23"/>
        <end position="26"/>
    </location>
</feature>
<feature type="helix" evidence="4">
    <location>
        <begin position="30"/>
        <end position="41"/>
    </location>
</feature>
<feature type="strand" evidence="4">
    <location>
        <begin position="46"/>
        <end position="51"/>
    </location>
</feature>
<feature type="helix" evidence="4">
    <location>
        <begin position="55"/>
        <end position="66"/>
    </location>
</feature>
<feature type="helix" evidence="4">
    <location>
        <begin position="67"/>
        <end position="71"/>
    </location>
</feature>
<feature type="strand" evidence="4">
    <location>
        <begin position="74"/>
        <end position="78"/>
    </location>
</feature>
<feature type="helix" evidence="4">
    <location>
        <begin position="82"/>
        <end position="85"/>
    </location>
</feature>
<feature type="strand" evidence="4">
    <location>
        <begin position="89"/>
        <end position="93"/>
    </location>
</feature>
<feature type="helix" evidence="4">
    <location>
        <begin position="105"/>
        <end position="126"/>
    </location>
</feature>
<feature type="strand" evidence="4">
    <location>
        <begin position="131"/>
        <end position="134"/>
    </location>
</feature>
<feature type="strand" evidence="4">
    <location>
        <begin position="136"/>
        <end position="138"/>
    </location>
</feature>
<feature type="helix" evidence="4">
    <location>
        <begin position="139"/>
        <end position="148"/>
    </location>
</feature>
<feature type="helix" evidence="4">
    <location>
        <begin position="154"/>
        <end position="156"/>
    </location>
</feature>
<feature type="strand" evidence="4">
    <location>
        <begin position="157"/>
        <end position="159"/>
    </location>
</feature>
<feature type="helix" evidence="4">
    <location>
        <begin position="163"/>
        <end position="177"/>
    </location>
</feature>
<feature type="helix" evidence="4">
    <location>
        <begin position="181"/>
        <end position="183"/>
    </location>
</feature>
<feature type="strand" evidence="4">
    <location>
        <begin position="188"/>
        <end position="193"/>
    </location>
</feature>
<feature type="helix" evidence="4">
    <location>
        <begin position="200"/>
        <end position="202"/>
    </location>
</feature>
<feature type="helix" evidence="4">
    <location>
        <begin position="210"/>
        <end position="213"/>
    </location>
</feature>
<feature type="turn" evidence="4">
    <location>
        <begin position="215"/>
        <end position="218"/>
    </location>
</feature>
<feature type="helix" evidence="4">
    <location>
        <begin position="226"/>
        <end position="234"/>
    </location>
</feature>
<feature type="helix" evidence="4">
    <location>
        <begin position="236"/>
        <end position="244"/>
    </location>
</feature>
<feature type="helix" evidence="4">
    <location>
        <begin position="249"/>
        <end position="263"/>
    </location>
</feature>
<feature type="strand" evidence="4">
    <location>
        <begin position="268"/>
        <end position="275"/>
    </location>
</feature>
<feature type="strand" evidence="4">
    <location>
        <begin position="287"/>
        <end position="295"/>
    </location>
</feature>
<feature type="strand" evidence="4">
    <location>
        <begin position="298"/>
        <end position="302"/>
    </location>
</feature>
<feature type="helix" evidence="4">
    <location>
        <begin position="309"/>
        <end position="327"/>
    </location>
</feature>
<sequence>MSTKEKLISHVMKEEPVGSRSKVTVVGVGMVGMASAISILLKDLCDELAMVDVMEDKLKGEVMDLQHGSLFLKTKIVGDKDYSVTANSKVVVVTAGARQQEGESRLNLVQRNVNIFKFIIPNIVKYSPNCILMVVSNPVDILTYVAWKLSGFPRHRVIGSGTNLDSARFRHLIGEKLHLHPSSCHAWIVGEHGDSSVPVWSGVNVAGVSLQGLNPQMGTEGDGENWKAIHKEVVDGAYEVIKLKGYTSWAIGMSVADLVESIIKNMHKVHPVSTLVQGMHGVKDEVFLSVPCVLGNSGLTDVIHMTLKAEEEKQLQKSAETLWGVQKELTL</sequence>
<proteinExistence type="evidence at protein level"/>
<name>LDHA_CHAGU</name>
<dbReference type="EC" id="1.1.1.27" evidence="2"/>
<dbReference type="EMBL" id="AF079824">
    <property type="protein sequence ID" value="AAC63282.1"/>
    <property type="molecule type" value="mRNA"/>
</dbReference>
<dbReference type="PDB" id="2V65">
    <property type="method" value="X-ray"/>
    <property type="resolution" value="2.35 A"/>
    <property type="chains" value="A/B=2-331"/>
</dbReference>
<dbReference type="PDBsum" id="2V65"/>
<dbReference type="SMR" id="O93541"/>
<dbReference type="BRENDA" id="1.1.1.27">
    <property type="organism ID" value="9919"/>
</dbReference>
<dbReference type="UniPathway" id="UPA00554">
    <property type="reaction ID" value="UER00611"/>
</dbReference>
<dbReference type="EvolutionaryTrace" id="O93541"/>
<dbReference type="GO" id="GO:0005737">
    <property type="term" value="C:cytoplasm"/>
    <property type="evidence" value="ECO:0007669"/>
    <property type="project" value="UniProtKB-SubCell"/>
</dbReference>
<dbReference type="GO" id="GO:0004459">
    <property type="term" value="F:L-lactate dehydrogenase activity"/>
    <property type="evidence" value="ECO:0007669"/>
    <property type="project" value="UniProtKB-EC"/>
</dbReference>
<dbReference type="GO" id="GO:0006089">
    <property type="term" value="P:lactate metabolic process"/>
    <property type="evidence" value="ECO:0007669"/>
    <property type="project" value="TreeGrafter"/>
</dbReference>
<dbReference type="CDD" id="cd05293">
    <property type="entry name" value="LDH_1"/>
    <property type="match status" value="1"/>
</dbReference>
<dbReference type="FunFam" id="3.40.50.720:FF:000029">
    <property type="entry name" value="L-lactate dehydrogenase A chain"/>
    <property type="match status" value="1"/>
</dbReference>
<dbReference type="FunFam" id="3.90.110.10:FF:000003">
    <property type="entry name" value="L-lactate dehydrogenase A chain"/>
    <property type="match status" value="1"/>
</dbReference>
<dbReference type="Gene3D" id="3.90.110.10">
    <property type="entry name" value="Lactate dehydrogenase/glycoside hydrolase, family 4, C-terminal"/>
    <property type="match status" value="1"/>
</dbReference>
<dbReference type="Gene3D" id="3.40.50.720">
    <property type="entry name" value="NAD(P)-binding Rossmann-like Domain"/>
    <property type="match status" value="1"/>
</dbReference>
<dbReference type="HAMAP" id="MF_00488">
    <property type="entry name" value="Lactate_dehydrog"/>
    <property type="match status" value="1"/>
</dbReference>
<dbReference type="InterPro" id="IPR001557">
    <property type="entry name" value="L-lactate/malate_DH"/>
</dbReference>
<dbReference type="InterPro" id="IPR011304">
    <property type="entry name" value="L-lactate_DH"/>
</dbReference>
<dbReference type="InterPro" id="IPR018177">
    <property type="entry name" value="L-lactate_DH_AS"/>
</dbReference>
<dbReference type="InterPro" id="IPR022383">
    <property type="entry name" value="Lactate/malate_DH_C"/>
</dbReference>
<dbReference type="InterPro" id="IPR001236">
    <property type="entry name" value="Lactate/malate_DH_N"/>
</dbReference>
<dbReference type="InterPro" id="IPR015955">
    <property type="entry name" value="Lactate_DH/Glyco_Ohase_4_C"/>
</dbReference>
<dbReference type="InterPro" id="IPR036291">
    <property type="entry name" value="NAD(P)-bd_dom_sf"/>
</dbReference>
<dbReference type="NCBIfam" id="TIGR01771">
    <property type="entry name" value="L-LDH-NAD"/>
    <property type="match status" value="1"/>
</dbReference>
<dbReference type="NCBIfam" id="NF004863">
    <property type="entry name" value="PRK06223.1"/>
    <property type="match status" value="1"/>
</dbReference>
<dbReference type="PANTHER" id="PTHR43128">
    <property type="entry name" value="L-2-HYDROXYCARBOXYLATE DEHYDROGENASE (NAD(P)(+))"/>
    <property type="match status" value="1"/>
</dbReference>
<dbReference type="PANTHER" id="PTHR43128:SF10">
    <property type="entry name" value="L-LACTATE DEHYDROGENASE A CHAIN"/>
    <property type="match status" value="1"/>
</dbReference>
<dbReference type="Pfam" id="PF02866">
    <property type="entry name" value="Ldh_1_C"/>
    <property type="match status" value="1"/>
</dbReference>
<dbReference type="Pfam" id="PF00056">
    <property type="entry name" value="Ldh_1_N"/>
    <property type="match status" value="1"/>
</dbReference>
<dbReference type="PIRSF" id="PIRSF000102">
    <property type="entry name" value="Lac_mal_DH"/>
    <property type="match status" value="1"/>
</dbReference>
<dbReference type="PRINTS" id="PR00086">
    <property type="entry name" value="LLDHDRGNASE"/>
</dbReference>
<dbReference type="SUPFAM" id="SSF56327">
    <property type="entry name" value="LDH C-terminal domain-like"/>
    <property type="match status" value="1"/>
</dbReference>
<dbReference type="SUPFAM" id="SSF51735">
    <property type="entry name" value="NAD(P)-binding Rossmann-fold domains"/>
    <property type="match status" value="1"/>
</dbReference>
<dbReference type="PROSITE" id="PS00064">
    <property type="entry name" value="L_LDH"/>
    <property type="match status" value="1"/>
</dbReference>
<keyword id="KW-0002">3D-structure</keyword>
<keyword id="KW-0963">Cytoplasm</keyword>
<keyword id="KW-0520">NAD</keyword>
<keyword id="KW-0560">Oxidoreductase</keyword>
<evidence type="ECO:0000250" key="1"/>
<evidence type="ECO:0000250" key="2">
    <source>
        <dbReference type="UniProtKB" id="P00338"/>
    </source>
</evidence>
<evidence type="ECO:0000305" key="3"/>
<evidence type="ECO:0007829" key="4">
    <source>
        <dbReference type="PDB" id="2V65"/>
    </source>
</evidence>
<comment type="function">
    <text evidence="2">Interconverts simultaneously and stereospecifically pyruvate and lactate with concomitant interconversion of NADH and NAD(+).</text>
</comment>
<comment type="catalytic activity">
    <reaction evidence="2">
        <text>(S)-lactate + NAD(+) = pyruvate + NADH + H(+)</text>
        <dbReference type="Rhea" id="RHEA:23444"/>
        <dbReference type="ChEBI" id="CHEBI:15361"/>
        <dbReference type="ChEBI" id="CHEBI:15378"/>
        <dbReference type="ChEBI" id="CHEBI:16651"/>
        <dbReference type="ChEBI" id="CHEBI:57540"/>
        <dbReference type="ChEBI" id="CHEBI:57945"/>
        <dbReference type="EC" id="1.1.1.27"/>
    </reaction>
    <physiologicalReaction direction="left-to-right" evidence="2">
        <dbReference type="Rhea" id="RHEA:23445"/>
    </physiologicalReaction>
    <physiologicalReaction direction="right-to-left" evidence="2">
        <dbReference type="Rhea" id="RHEA:23446"/>
    </physiologicalReaction>
</comment>
<comment type="pathway">
    <text evidence="2">Fermentation; pyruvate fermentation to lactate; (S)-lactate from pyruvate: step 1/1.</text>
</comment>
<comment type="subunit">
    <text evidence="1">Homotetramer.</text>
</comment>
<comment type="subcellular location">
    <subcellularLocation>
        <location evidence="1">Cytoplasm</location>
    </subcellularLocation>
</comment>
<comment type="similarity">
    <text evidence="3">Belongs to the LDH/MDH superfamily. LDH family.</text>
</comment>
<protein>
    <recommendedName>
        <fullName>L-lactate dehydrogenase A chain</fullName>
        <shortName>LDH-A</shortName>
        <ecNumber evidence="2">1.1.1.27</ecNumber>
    </recommendedName>
</protein>
<reference key="1">
    <citation type="journal article" date="1998" name="Proc. Natl. Acad. Sci. U.S.A.">
        <title>Hot spots in cold adaptation: localized increases in conformational flexibility in lactate dehydrogenase A4 orthologs of Antarctic notothenioid fishes.</title>
        <authorList>
            <person name="Fields P.A."/>
            <person name="Somero G.N."/>
        </authorList>
    </citation>
    <scope>NUCLEOTIDE SEQUENCE [MRNA]</scope>
    <source>
        <tissue>Muscle</tissue>
    </source>
</reference>
<accession>O93541</accession>
<gene>
    <name type="primary">ldha</name>
</gene>
<organism>
    <name type="scientific">Champsocephalus gunnari</name>
    <name type="common">Mackerel icefish</name>
    <dbReference type="NCBI Taxonomy" id="52237"/>
    <lineage>
        <taxon>Eukaryota</taxon>
        <taxon>Metazoa</taxon>
        <taxon>Chordata</taxon>
        <taxon>Craniata</taxon>
        <taxon>Vertebrata</taxon>
        <taxon>Euteleostomi</taxon>
        <taxon>Actinopterygii</taxon>
        <taxon>Neopterygii</taxon>
        <taxon>Teleostei</taxon>
        <taxon>Neoteleostei</taxon>
        <taxon>Acanthomorphata</taxon>
        <taxon>Eupercaria</taxon>
        <taxon>Perciformes</taxon>
        <taxon>Notothenioidei</taxon>
        <taxon>Channichthyidae</taxon>
        <taxon>Champsocephalus</taxon>
    </lineage>
</organism>